<proteinExistence type="inferred from homology"/>
<name>AROD_SALSV</name>
<sequence length="252" mass="27281">MKTVTVRDLVVGEGAPKIIVSLMGKTITDVKSEALAYREADFDILEWRVDHFANVTTAESVLEAAGAIREIITDKPLLFTFRSAKEGGEQALTTGQYIALNRAAVDSGLVDMIDLELFTGDDEVKATVGYAHQHNVAVIMSNHDFHKTPAAEEIVQRLRKMQELGADIPKIAVMPQTKADVLTLLTATVEMQERYADRPIITMSMSKTGVISRLAGEVFGSAATFGAVKKASAPGQISVADLRTVLTILHQA</sequence>
<feature type="chain" id="PRO_1000099917" description="3-dehydroquinate dehydratase">
    <location>
        <begin position="1"/>
        <end position="252"/>
    </location>
</feature>
<feature type="active site" description="Proton donor/acceptor" evidence="1">
    <location>
        <position position="143"/>
    </location>
</feature>
<feature type="active site" description="Schiff-base intermediate with substrate" evidence="1">
    <location>
        <position position="170"/>
    </location>
</feature>
<feature type="binding site" evidence="1">
    <location>
        <position position="21"/>
    </location>
    <ligand>
        <name>3-dehydroquinate</name>
        <dbReference type="ChEBI" id="CHEBI:32364"/>
    </ligand>
</feature>
<feature type="binding site" evidence="1">
    <location>
        <begin position="46"/>
        <end position="48"/>
    </location>
    <ligand>
        <name>3-dehydroquinate</name>
        <dbReference type="ChEBI" id="CHEBI:32364"/>
    </ligand>
</feature>
<feature type="binding site" evidence="1">
    <location>
        <position position="82"/>
    </location>
    <ligand>
        <name>3-dehydroquinate</name>
        <dbReference type="ChEBI" id="CHEBI:32364"/>
    </ligand>
</feature>
<feature type="binding site" evidence="1">
    <location>
        <position position="213"/>
    </location>
    <ligand>
        <name>3-dehydroquinate</name>
        <dbReference type="ChEBI" id="CHEBI:32364"/>
    </ligand>
</feature>
<feature type="binding site" evidence="1">
    <location>
        <position position="232"/>
    </location>
    <ligand>
        <name>3-dehydroquinate</name>
        <dbReference type="ChEBI" id="CHEBI:32364"/>
    </ligand>
</feature>
<feature type="binding site" evidence="1">
    <location>
        <position position="236"/>
    </location>
    <ligand>
        <name>3-dehydroquinate</name>
        <dbReference type="ChEBI" id="CHEBI:32364"/>
    </ligand>
</feature>
<dbReference type="EC" id="4.2.1.10" evidence="1"/>
<dbReference type="EMBL" id="CP001127">
    <property type="protein sequence ID" value="ACF89326.1"/>
    <property type="molecule type" value="Genomic_DNA"/>
</dbReference>
<dbReference type="RefSeq" id="WP_000860224.1">
    <property type="nucleotide sequence ID" value="NC_011094.1"/>
</dbReference>
<dbReference type="SMR" id="B4TUS2"/>
<dbReference type="KEGG" id="sew:SeSA_A1454"/>
<dbReference type="HOGENOM" id="CLU_064444_0_0_6"/>
<dbReference type="UniPathway" id="UPA00053">
    <property type="reaction ID" value="UER00086"/>
</dbReference>
<dbReference type="Proteomes" id="UP000001865">
    <property type="component" value="Chromosome"/>
</dbReference>
<dbReference type="GO" id="GO:0003855">
    <property type="term" value="F:3-dehydroquinate dehydratase activity"/>
    <property type="evidence" value="ECO:0007669"/>
    <property type="project" value="UniProtKB-UniRule"/>
</dbReference>
<dbReference type="GO" id="GO:0046279">
    <property type="term" value="P:3,4-dihydroxybenzoate biosynthetic process"/>
    <property type="evidence" value="ECO:0007669"/>
    <property type="project" value="TreeGrafter"/>
</dbReference>
<dbReference type="GO" id="GO:0008652">
    <property type="term" value="P:amino acid biosynthetic process"/>
    <property type="evidence" value="ECO:0007669"/>
    <property type="project" value="UniProtKB-KW"/>
</dbReference>
<dbReference type="GO" id="GO:0009073">
    <property type="term" value="P:aromatic amino acid family biosynthetic process"/>
    <property type="evidence" value="ECO:0007669"/>
    <property type="project" value="UniProtKB-KW"/>
</dbReference>
<dbReference type="GO" id="GO:0009423">
    <property type="term" value="P:chorismate biosynthetic process"/>
    <property type="evidence" value="ECO:0007669"/>
    <property type="project" value="UniProtKB-UniRule"/>
</dbReference>
<dbReference type="CDD" id="cd00502">
    <property type="entry name" value="DHQase_I"/>
    <property type="match status" value="1"/>
</dbReference>
<dbReference type="FunFam" id="3.20.20.70:FF:000047">
    <property type="entry name" value="3-dehydroquinate dehydratase"/>
    <property type="match status" value="1"/>
</dbReference>
<dbReference type="Gene3D" id="3.20.20.70">
    <property type="entry name" value="Aldolase class I"/>
    <property type="match status" value="1"/>
</dbReference>
<dbReference type="HAMAP" id="MF_00214">
    <property type="entry name" value="AroD"/>
    <property type="match status" value="1"/>
</dbReference>
<dbReference type="InterPro" id="IPR018508">
    <property type="entry name" value="3-dehydroquinate_DH_AS"/>
</dbReference>
<dbReference type="InterPro" id="IPR013785">
    <property type="entry name" value="Aldolase_TIM"/>
</dbReference>
<dbReference type="InterPro" id="IPR001381">
    <property type="entry name" value="DHquinase_I"/>
</dbReference>
<dbReference type="InterPro" id="IPR050146">
    <property type="entry name" value="Type-I_3-dehydroquinase"/>
</dbReference>
<dbReference type="NCBIfam" id="TIGR01093">
    <property type="entry name" value="aroD"/>
    <property type="match status" value="1"/>
</dbReference>
<dbReference type="PANTHER" id="PTHR43699">
    <property type="entry name" value="3-DEHYDROQUINATE DEHYDRATASE"/>
    <property type="match status" value="1"/>
</dbReference>
<dbReference type="PANTHER" id="PTHR43699:SF1">
    <property type="entry name" value="3-DEHYDROQUINATE DEHYDRATASE"/>
    <property type="match status" value="1"/>
</dbReference>
<dbReference type="Pfam" id="PF01487">
    <property type="entry name" value="DHquinase_I"/>
    <property type="match status" value="1"/>
</dbReference>
<dbReference type="SUPFAM" id="SSF51569">
    <property type="entry name" value="Aldolase"/>
    <property type="match status" value="1"/>
</dbReference>
<dbReference type="PROSITE" id="PS01028">
    <property type="entry name" value="DEHYDROQUINASE_I"/>
    <property type="match status" value="1"/>
</dbReference>
<accession>B4TUS2</accession>
<evidence type="ECO:0000255" key="1">
    <source>
        <dbReference type="HAMAP-Rule" id="MF_00214"/>
    </source>
</evidence>
<protein>
    <recommendedName>
        <fullName evidence="1">3-dehydroquinate dehydratase</fullName>
        <shortName evidence="1">3-dehydroquinase</shortName>
        <ecNumber evidence="1">4.2.1.10</ecNumber>
    </recommendedName>
    <alternativeName>
        <fullName evidence="1">Type I DHQase</fullName>
    </alternativeName>
    <alternativeName>
        <fullName evidence="1">Type I dehydroquinase</fullName>
        <shortName evidence="1">DHQ1</shortName>
    </alternativeName>
</protein>
<gene>
    <name evidence="1" type="primary">aroD</name>
    <name type="ordered locus">SeSA_A1454</name>
</gene>
<reference key="1">
    <citation type="journal article" date="2011" name="J. Bacteriol.">
        <title>Comparative genomics of 28 Salmonella enterica isolates: evidence for CRISPR-mediated adaptive sublineage evolution.</title>
        <authorList>
            <person name="Fricke W.F."/>
            <person name="Mammel M.K."/>
            <person name="McDermott P.F."/>
            <person name="Tartera C."/>
            <person name="White D.G."/>
            <person name="Leclerc J.E."/>
            <person name="Ravel J."/>
            <person name="Cebula T.A."/>
        </authorList>
    </citation>
    <scope>NUCLEOTIDE SEQUENCE [LARGE SCALE GENOMIC DNA]</scope>
    <source>
        <strain>CVM19633</strain>
    </source>
</reference>
<keyword id="KW-0028">Amino-acid biosynthesis</keyword>
<keyword id="KW-0057">Aromatic amino acid biosynthesis</keyword>
<keyword id="KW-0456">Lyase</keyword>
<keyword id="KW-0704">Schiff base</keyword>
<organism>
    <name type="scientific">Salmonella schwarzengrund (strain CVM19633)</name>
    <dbReference type="NCBI Taxonomy" id="439843"/>
    <lineage>
        <taxon>Bacteria</taxon>
        <taxon>Pseudomonadati</taxon>
        <taxon>Pseudomonadota</taxon>
        <taxon>Gammaproteobacteria</taxon>
        <taxon>Enterobacterales</taxon>
        <taxon>Enterobacteriaceae</taxon>
        <taxon>Salmonella</taxon>
    </lineage>
</organism>
<comment type="function">
    <text evidence="1">Involved in the third step of the chorismate pathway, which leads to the biosynthesis of aromatic amino acids. Catalyzes the cis-dehydration of 3-dehydroquinate (DHQ) and introduces the first double bond of the aromatic ring to yield 3-dehydroshikimate.</text>
</comment>
<comment type="catalytic activity">
    <reaction evidence="1">
        <text>3-dehydroquinate = 3-dehydroshikimate + H2O</text>
        <dbReference type="Rhea" id="RHEA:21096"/>
        <dbReference type="ChEBI" id="CHEBI:15377"/>
        <dbReference type="ChEBI" id="CHEBI:16630"/>
        <dbReference type="ChEBI" id="CHEBI:32364"/>
        <dbReference type="EC" id="4.2.1.10"/>
    </reaction>
</comment>
<comment type="pathway">
    <text evidence="1">Metabolic intermediate biosynthesis; chorismate biosynthesis; chorismate from D-erythrose 4-phosphate and phosphoenolpyruvate: step 3/7.</text>
</comment>
<comment type="subunit">
    <text evidence="1">Homodimer.</text>
</comment>
<comment type="similarity">
    <text evidence="1">Belongs to the type-I 3-dehydroquinase family.</text>
</comment>